<protein>
    <recommendedName>
        <fullName>Nuclear factor 1 C-type</fullName>
        <shortName>NF1-C</shortName>
        <shortName>Nuclear factor 1/C</shortName>
    </recommendedName>
    <alternativeName>
        <fullName>CCAAT-box-binding transcription factor</fullName>
        <shortName>CTF</shortName>
    </alternativeName>
    <alternativeName>
        <fullName>Nuclear factor I/C</fullName>
        <shortName>NF-I/C</shortName>
        <shortName>NFI-C</shortName>
    </alternativeName>
    <alternativeName>
        <fullName>TGGCA-binding protein</fullName>
    </alternativeName>
</protein>
<reference key="1">
    <citation type="journal article" date="1990" name="Nucleic Acids Res.">
        <title>Chicken NFI/TGGCA proteins are encoded by at least three independent genes: NFI-A, NFI-B and NFI-C with homologues in mammalian genomes.</title>
        <authorList>
            <person name="Rupp R.A.W."/>
            <person name="Kruse U."/>
            <person name="Multhaup G."/>
            <person name="Goebel U."/>
            <person name="Beyreuther K."/>
            <person name="Sippel A.E."/>
        </authorList>
    </citation>
    <scope>NUCLEOTIDE SEQUENCE [MRNA]</scope>
    <scope>PARTIAL PROTEIN SEQUENCE</scope>
    <source>
        <tissue>Embryo</tissue>
    </source>
</reference>
<sequence>MYSSPLCLTQDEFHPFIEALLPHVRAFAYTWFNLQARKRKYFKKHEKRMTKDEERAVKDELLSEKPEVKQKWASRLLAKLRKDIRPECREDFVLSITGKKPSCCVLSNPDQKGKMRRIDCLRQADKVWRLDLVMVILFKGIPLESTDGERLVKAGQCTNPILCIQPHHISVSVKELDLYLAYFVRERDSEQSSSPRTGIASDQEDTKPNTLDSTDFQESFVTSGVFSVTELIQVSRTPVVTGTGPNFSLGELQGHLAYDLNPSSTGMRRTLPSTSSSGSKRHKSGSMEDDIDTSPGGEYYTSSNSPTSSSRNWTEDMEGGISPNVKTEMDKSPFNSPSPQDSSPRLSSFTQHHRPVIAVHSGIARSPHPSSTLHFPTTSILPQTASTYFPHTAIRYPPHLNPQDPLKDLVSLACDPSNQQPGPPTLHQARPLRTVPSWD</sequence>
<dbReference type="EMBL" id="X51483">
    <property type="protein sequence ID" value="CAA35850.1"/>
    <property type="molecule type" value="mRNA"/>
</dbReference>
<dbReference type="RefSeq" id="NP_001384233.1">
    <molecule id="P17926-1"/>
    <property type="nucleotide sequence ID" value="NM_001397304.1"/>
</dbReference>
<dbReference type="RefSeq" id="XP_015155166.1">
    <property type="nucleotide sequence ID" value="XM_015299680.1"/>
</dbReference>
<dbReference type="SMR" id="P17926"/>
<dbReference type="FunCoup" id="P17926">
    <property type="interactions" value="1179"/>
</dbReference>
<dbReference type="STRING" id="9031.ENSGALP00000046060"/>
<dbReference type="PaxDb" id="9031-ENSGALP00000017751"/>
<dbReference type="Ensembl" id="ENSGALT00010068254.1">
    <molecule id="P17926-1"/>
    <property type="protein sequence ID" value="ENSGALP00010041997.1"/>
    <property type="gene ID" value="ENSGALG00010028165.1"/>
</dbReference>
<dbReference type="GeneID" id="396208"/>
<dbReference type="VEuPathDB" id="HostDB:geneid_396208"/>
<dbReference type="eggNOG" id="KOG3663">
    <property type="taxonomic scope" value="Eukaryota"/>
</dbReference>
<dbReference type="GeneTree" id="ENSGT00950000182916"/>
<dbReference type="InParanoid" id="P17926"/>
<dbReference type="OrthoDB" id="10055441at2759"/>
<dbReference type="PRO" id="PR:P17926"/>
<dbReference type="Proteomes" id="UP000000539">
    <property type="component" value="Chromosome 28"/>
</dbReference>
<dbReference type="Bgee" id="ENSGALG00000041643">
    <property type="expression patterns" value="Expressed in cerebellum and 12 other cell types or tissues"/>
</dbReference>
<dbReference type="GO" id="GO:0005634">
    <property type="term" value="C:nucleus"/>
    <property type="evidence" value="ECO:0000318"/>
    <property type="project" value="GO_Central"/>
</dbReference>
<dbReference type="GO" id="GO:0000981">
    <property type="term" value="F:DNA-binding transcription factor activity, RNA polymerase II-specific"/>
    <property type="evidence" value="ECO:0000318"/>
    <property type="project" value="GO_Central"/>
</dbReference>
<dbReference type="GO" id="GO:0000978">
    <property type="term" value="F:RNA polymerase II cis-regulatory region sequence-specific DNA binding"/>
    <property type="evidence" value="ECO:0000318"/>
    <property type="project" value="GO_Central"/>
</dbReference>
<dbReference type="GO" id="GO:0006260">
    <property type="term" value="P:DNA replication"/>
    <property type="evidence" value="ECO:0007669"/>
    <property type="project" value="UniProtKB-KW"/>
</dbReference>
<dbReference type="GO" id="GO:0045893">
    <property type="term" value="P:positive regulation of DNA-templated transcription"/>
    <property type="evidence" value="ECO:0007669"/>
    <property type="project" value="UniProtKB-ARBA"/>
</dbReference>
<dbReference type="GO" id="GO:0006357">
    <property type="term" value="P:regulation of transcription by RNA polymerase II"/>
    <property type="evidence" value="ECO:0000318"/>
    <property type="project" value="GO_Central"/>
</dbReference>
<dbReference type="InterPro" id="IPR000647">
    <property type="entry name" value="CTF/NFI"/>
</dbReference>
<dbReference type="InterPro" id="IPR020604">
    <property type="entry name" value="CTF/NFI_DNA-bd-dom"/>
</dbReference>
<dbReference type="InterPro" id="IPR019739">
    <property type="entry name" value="CTF/NFI_DNA-bd_CS"/>
</dbReference>
<dbReference type="InterPro" id="IPR019548">
    <property type="entry name" value="CTF/NFI_DNA-bd_N"/>
</dbReference>
<dbReference type="InterPro" id="IPR003619">
    <property type="entry name" value="MAD_homology1_Dwarfin-type"/>
</dbReference>
<dbReference type="PANTHER" id="PTHR11492:SF2">
    <property type="entry name" value="NUCLEAR FACTOR 1 C-TYPE"/>
    <property type="match status" value="1"/>
</dbReference>
<dbReference type="PANTHER" id="PTHR11492">
    <property type="entry name" value="NUCLEAR FACTOR I"/>
    <property type="match status" value="1"/>
</dbReference>
<dbReference type="Pfam" id="PF00859">
    <property type="entry name" value="CTF_NFI"/>
    <property type="match status" value="1"/>
</dbReference>
<dbReference type="Pfam" id="PF03165">
    <property type="entry name" value="MH1"/>
    <property type="match status" value="1"/>
</dbReference>
<dbReference type="Pfam" id="PF10524">
    <property type="entry name" value="NfI_DNAbd_pre-N"/>
    <property type="match status" value="1"/>
</dbReference>
<dbReference type="SMART" id="SM00523">
    <property type="entry name" value="DWA"/>
    <property type="match status" value="1"/>
</dbReference>
<dbReference type="PROSITE" id="PS00349">
    <property type="entry name" value="CTF_NFI_1"/>
    <property type="match status" value="1"/>
</dbReference>
<dbReference type="PROSITE" id="PS51080">
    <property type="entry name" value="CTF_NFI_2"/>
    <property type="match status" value="1"/>
</dbReference>
<name>NFIC_CHICK</name>
<accession>P17926</accession>
<comment type="function">
    <text>Recognizes and binds the palindromic sequence 5'-TTGGCNNNNNGCCAA-3' present in viral and cellular promoters and in the origin of replication of adenovirus type 2. These proteins are individually capable of activating transcription and replication.</text>
</comment>
<comment type="subunit">
    <text>Binds DNA as a homodimer.</text>
</comment>
<comment type="subcellular location">
    <subcellularLocation>
        <location>Nucleus</location>
    </subcellularLocation>
</comment>
<comment type="alternative products">
    <event type="alternative splicing"/>
    <isoform>
        <id>P17926-1</id>
        <name>1</name>
        <sequence type="displayed"/>
    </isoform>
    <text>A number of isoforms are produced.</text>
</comment>
<comment type="domain">
    <text evidence="1">The 9aaTAD motif is a transactivation domain present in a large number of yeast and animal transcription factors.</text>
</comment>
<comment type="similarity">
    <text evidence="2">Belongs to the CTF/NF-I family.</text>
</comment>
<keyword id="KW-0010">Activator</keyword>
<keyword id="KW-0025">Alternative splicing</keyword>
<keyword id="KW-0903">Direct protein sequencing</keyword>
<keyword id="KW-0235">DNA replication</keyword>
<keyword id="KW-0238">DNA-binding</keyword>
<keyword id="KW-0539">Nucleus</keyword>
<keyword id="KW-1185">Reference proteome</keyword>
<keyword id="KW-0804">Transcription</keyword>
<keyword id="KW-0805">Transcription regulation</keyword>
<proteinExistence type="evidence at protein level"/>
<feature type="chain" id="PRO_0000100202" description="Nuclear factor 1 C-type">
    <location>
        <begin position="1"/>
        <end position="439"/>
    </location>
</feature>
<feature type="DNA-binding region" description="CTF/NF-I" evidence="2">
    <location>
        <begin position="1"/>
        <end position="195"/>
    </location>
</feature>
<feature type="region of interest" description="Disordered" evidence="3">
    <location>
        <begin position="191"/>
        <end position="214"/>
    </location>
</feature>
<feature type="region of interest" description="Disordered" evidence="3">
    <location>
        <begin position="260"/>
        <end position="349"/>
    </location>
</feature>
<feature type="region of interest" description="Disordered" evidence="3">
    <location>
        <begin position="415"/>
        <end position="439"/>
    </location>
</feature>
<feature type="short sequence motif" description="9aaTAD" evidence="1">
    <location>
        <begin position="404"/>
        <end position="412"/>
    </location>
</feature>
<feature type="compositionally biased region" description="Low complexity" evidence="3">
    <location>
        <begin position="301"/>
        <end position="310"/>
    </location>
</feature>
<feature type="compositionally biased region" description="Polar residues" evidence="3">
    <location>
        <begin position="333"/>
        <end position="349"/>
    </location>
</feature>
<organism>
    <name type="scientific">Gallus gallus</name>
    <name type="common">Chicken</name>
    <dbReference type="NCBI Taxonomy" id="9031"/>
    <lineage>
        <taxon>Eukaryota</taxon>
        <taxon>Metazoa</taxon>
        <taxon>Chordata</taxon>
        <taxon>Craniata</taxon>
        <taxon>Vertebrata</taxon>
        <taxon>Euteleostomi</taxon>
        <taxon>Archelosauria</taxon>
        <taxon>Archosauria</taxon>
        <taxon>Dinosauria</taxon>
        <taxon>Saurischia</taxon>
        <taxon>Theropoda</taxon>
        <taxon>Coelurosauria</taxon>
        <taxon>Aves</taxon>
        <taxon>Neognathae</taxon>
        <taxon>Galloanserae</taxon>
        <taxon>Galliformes</taxon>
        <taxon>Phasianidae</taxon>
        <taxon>Phasianinae</taxon>
        <taxon>Gallus</taxon>
    </lineage>
</organism>
<gene>
    <name type="primary">NFIC</name>
    <name type="synonym">NFI-C</name>
</gene>
<evidence type="ECO:0000250" key="1">
    <source>
        <dbReference type="UniProtKB" id="P08651"/>
    </source>
</evidence>
<evidence type="ECO:0000255" key="2">
    <source>
        <dbReference type="PROSITE-ProRule" id="PRU00436"/>
    </source>
</evidence>
<evidence type="ECO:0000256" key="3">
    <source>
        <dbReference type="SAM" id="MobiDB-lite"/>
    </source>
</evidence>